<proteinExistence type="evidence at protein level"/>
<sequence>PRLRRLTGLSPLRAP</sequence>
<organism>
    <name type="scientific">Campsomeriella annulata</name>
    <name type="common">Wasp</name>
    <name type="synonym">Campsomeris annulata</name>
    <dbReference type="NCBI Taxonomy" id="1574124"/>
    <lineage>
        <taxon>Eukaryota</taxon>
        <taxon>Metazoa</taxon>
        <taxon>Ecdysozoa</taxon>
        <taxon>Arthropoda</taxon>
        <taxon>Hexapoda</taxon>
        <taxon>Insecta</taxon>
        <taxon>Pterygota</taxon>
        <taxon>Neoptera</taxon>
        <taxon>Endopterygota</taxon>
        <taxon>Hymenoptera</taxon>
        <taxon>Apocrita</taxon>
        <taxon>Aculeata</taxon>
        <taxon>Scolioidea</taxon>
        <taxon>Scoliidae</taxon>
        <taxon>Campsomeriella</taxon>
    </lineage>
</organism>
<accession>P0DW50</accession>
<dbReference type="GO" id="GO:0005576">
    <property type="term" value="C:extracellular region"/>
    <property type="evidence" value="ECO:0007669"/>
    <property type="project" value="UniProtKB-SubCell"/>
</dbReference>
<feature type="peptide" id="PRO_0000456298" description="Beta-campsomerin" evidence="1">
    <location>
        <begin position="1"/>
        <end position="15"/>
    </location>
</feature>
<feature type="peptide" id="PRO_0000456299" description="Alpha-campsomerin" evidence="1">
    <location>
        <begin position="1"/>
        <end position="13"/>
    </location>
</feature>
<keyword id="KW-0903">Direct protein sequencing</keyword>
<keyword id="KW-0964">Secreted</keyword>
<evidence type="ECO:0000269" key="1">
    <source>
    </source>
</evidence>
<evidence type="ECO:0000303" key="2">
    <source>
    </source>
</evidence>
<evidence type="ECO:0000305" key="3"/>
<evidence type="ECO:0000305" key="4">
    <source>
    </source>
</evidence>
<reference key="1">
    <citation type="journal article" date="2021" name="Toxins">
        <title>Comprehensive analysis and biological characterization of venom components from solitary scoliid wasp a annulata annulata.</title>
        <authorList>
            <person name="Alberto-Silva C."/>
            <person name="Vieira Portaro F.C."/>
            <person name="Kodama R.T."/>
            <person name="Pantaleao H.Q."/>
            <person name="Inagaki H."/>
            <person name="Nihei K.I."/>
            <person name="Konno K."/>
        </authorList>
    </citation>
    <scope>PROTEIN SEQUENCE</scope>
    <scope>FUNCTION</scope>
    <scope>SUBCELLULAR LOCATION</scope>
    <scope>MASS SPECTROMETRY</scope>
    <scope>SYNTHESIS OF ALPHA AND BETA-CAMPSOMERIN</scope>
    <source>
        <tissue>Venom</tissue>
    </source>
</reference>
<comment type="function">
    <molecule>Alpha-campsomerin</molecule>
    <text evidence="1">Shows cell viability potentiating effect in neuronal PC12 cells. Does not show neuroprotective benefits against H2O2-induced oxidative stress in PC12 neuronal cells. Has no effects on metallopeptidases (human neprilysin (NEP) and angiotensin-converting enzyme (ACE)) and acetylcholinesterase (AChE), and has no cytotoxic effects.</text>
</comment>
<comment type="function">
    <molecule>Beta-campsomerin</molecule>
    <text evidence="1">Does not show cell viability potentiating effect in neuronal PC12 cells. Does not show neuroprotective benefits against H2O2-induced oxidative stress in PC12 neuronal cells. Has no effects on metallopeptidases (human neprilysin (NEP) and angiotensin-converting enzyme (ACE)) and acetylcholinesterase (AChE), and has no cytotoxic effects.</text>
</comment>
<comment type="subcellular location">
    <subcellularLocation>
        <location evidence="1">Secreted</location>
    </subcellularLocation>
</comment>
<comment type="tissue specificity">
    <text evidence="4">Expressed by the venom gland.</text>
</comment>
<comment type="mass spectrometry">
    <molecule>Alpha-campsomerin</molecule>
</comment>
<comment type="mass spectrometry">
    <molecule>Beta-campsomerin</molecule>
</comment>
<comment type="similarity">
    <text evidence="3">Belongs to the bradykinin-related peptide family.</text>
</comment>
<name>CAMP_CAMAN</name>
<protein>
    <recommendedName>
        <fullName evidence="2">Beta-campsomerin</fullName>
    </recommendedName>
    <alternativeName>
        <fullName evidence="2">Bradykinin-related peptide</fullName>
    </alternativeName>
    <component>
        <recommendedName>
            <fullName evidence="2">Alpha-campsomerin</fullName>
        </recommendedName>
    </component>
</protein>